<name>PSTB_STRAW</name>
<sequence>MAKRIDVSGLTAYYGSHKAIEDISMTVEPRSVTAFIGPSGCGKSTFLRTLNRMHEVTPGGRVEGKVLLDDEDLYGQGIDPVSVRREVGMVFQRPNPFPTMSIFDNVAAGLRLNGSYKKSELSEIVEKSLKGANLWNEVKDRLNKPGSGLSGGQQQRLCIARAIAVEPNVLLMDEPCSALDPISTLAIEDLIGELKERFTIVIVTHNMQQAARVSDRTAFFNLAAVGQPGRLIEVDETERIFSNPSVQATEDYISGRFG</sequence>
<feature type="chain" id="PRO_0000092892" description="Phosphate import ATP-binding protein PstB">
    <location>
        <begin position="1"/>
        <end position="258"/>
    </location>
</feature>
<feature type="domain" description="ABC transporter" evidence="1">
    <location>
        <begin position="5"/>
        <end position="247"/>
    </location>
</feature>
<feature type="binding site" evidence="1">
    <location>
        <begin position="37"/>
        <end position="44"/>
    </location>
    <ligand>
        <name>ATP</name>
        <dbReference type="ChEBI" id="CHEBI:30616"/>
    </ligand>
</feature>
<evidence type="ECO:0000255" key="1">
    <source>
        <dbReference type="HAMAP-Rule" id="MF_01702"/>
    </source>
</evidence>
<proteinExistence type="inferred from homology"/>
<keyword id="KW-0067">ATP-binding</keyword>
<keyword id="KW-1003">Cell membrane</keyword>
<keyword id="KW-0472">Membrane</keyword>
<keyword id="KW-0547">Nucleotide-binding</keyword>
<keyword id="KW-0592">Phosphate transport</keyword>
<keyword id="KW-1185">Reference proteome</keyword>
<keyword id="KW-1278">Translocase</keyword>
<keyword id="KW-0813">Transport</keyword>
<dbReference type="EC" id="7.3.2.1" evidence="1"/>
<dbReference type="EMBL" id="BA000030">
    <property type="protein sequence ID" value="BAC71787.1"/>
    <property type="molecule type" value="Genomic_DNA"/>
</dbReference>
<dbReference type="RefSeq" id="WP_010985504.1">
    <property type="nucleotide sequence ID" value="NZ_JZJK01000060.1"/>
</dbReference>
<dbReference type="SMR" id="Q82G23"/>
<dbReference type="GeneID" id="41541139"/>
<dbReference type="KEGG" id="sma:SAVERM_4075"/>
<dbReference type="eggNOG" id="COG1117">
    <property type="taxonomic scope" value="Bacteria"/>
</dbReference>
<dbReference type="HOGENOM" id="CLU_000604_1_22_11"/>
<dbReference type="OrthoDB" id="4283894at2"/>
<dbReference type="Proteomes" id="UP000000428">
    <property type="component" value="Chromosome"/>
</dbReference>
<dbReference type="GO" id="GO:0005886">
    <property type="term" value="C:plasma membrane"/>
    <property type="evidence" value="ECO:0007669"/>
    <property type="project" value="UniProtKB-SubCell"/>
</dbReference>
<dbReference type="GO" id="GO:0005524">
    <property type="term" value="F:ATP binding"/>
    <property type="evidence" value="ECO:0007669"/>
    <property type="project" value="UniProtKB-KW"/>
</dbReference>
<dbReference type="GO" id="GO:0016887">
    <property type="term" value="F:ATP hydrolysis activity"/>
    <property type="evidence" value="ECO:0007669"/>
    <property type="project" value="InterPro"/>
</dbReference>
<dbReference type="GO" id="GO:0015415">
    <property type="term" value="F:ATPase-coupled phosphate ion transmembrane transporter activity"/>
    <property type="evidence" value="ECO:0007669"/>
    <property type="project" value="UniProtKB-EC"/>
</dbReference>
<dbReference type="GO" id="GO:0035435">
    <property type="term" value="P:phosphate ion transmembrane transport"/>
    <property type="evidence" value="ECO:0007669"/>
    <property type="project" value="InterPro"/>
</dbReference>
<dbReference type="CDD" id="cd03260">
    <property type="entry name" value="ABC_PstB_phosphate_transporter"/>
    <property type="match status" value="1"/>
</dbReference>
<dbReference type="Gene3D" id="3.40.50.300">
    <property type="entry name" value="P-loop containing nucleotide triphosphate hydrolases"/>
    <property type="match status" value="1"/>
</dbReference>
<dbReference type="InterPro" id="IPR003593">
    <property type="entry name" value="AAA+_ATPase"/>
</dbReference>
<dbReference type="InterPro" id="IPR003439">
    <property type="entry name" value="ABC_transporter-like_ATP-bd"/>
</dbReference>
<dbReference type="InterPro" id="IPR017871">
    <property type="entry name" value="ABC_transporter-like_CS"/>
</dbReference>
<dbReference type="InterPro" id="IPR027417">
    <property type="entry name" value="P-loop_NTPase"/>
</dbReference>
<dbReference type="InterPro" id="IPR005670">
    <property type="entry name" value="PstB-like"/>
</dbReference>
<dbReference type="NCBIfam" id="TIGR00972">
    <property type="entry name" value="3a0107s01c2"/>
    <property type="match status" value="1"/>
</dbReference>
<dbReference type="PANTHER" id="PTHR43423">
    <property type="entry name" value="ABC TRANSPORTER I FAMILY MEMBER 17"/>
    <property type="match status" value="1"/>
</dbReference>
<dbReference type="PANTHER" id="PTHR43423:SF1">
    <property type="entry name" value="ABC TRANSPORTER I FAMILY MEMBER 17"/>
    <property type="match status" value="1"/>
</dbReference>
<dbReference type="Pfam" id="PF00005">
    <property type="entry name" value="ABC_tran"/>
    <property type="match status" value="1"/>
</dbReference>
<dbReference type="SMART" id="SM00382">
    <property type="entry name" value="AAA"/>
    <property type="match status" value="1"/>
</dbReference>
<dbReference type="SUPFAM" id="SSF52540">
    <property type="entry name" value="P-loop containing nucleoside triphosphate hydrolases"/>
    <property type="match status" value="1"/>
</dbReference>
<dbReference type="PROSITE" id="PS00211">
    <property type="entry name" value="ABC_TRANSPORTER_1"/>
    <property type="match status" value="1"/>
</dbReference>
<dbReference type="PROSITE" id="PS50893">
    <property type="entry name" value="ABC_TRANSPORTER_2"/>
    <property type="match status" value="1"/>
</dbReference>
<dbReference type="PROSITE" id="PS51238">
    <property type="entry name" value="PSTB"/>
    <property type="match status" value="1"/>
</dbReference>
<protein>
    <recommendedName>
        <fullName evidence="1">Phosphate import ATP-binding protein PstB</fullName>
        <ecNumber evidence="1">7.3.2.1</ecNumber>
    </recommendedName>
    <alternativeName>
        <fullName evidence="1">ABC phosphate transporter</fullName>
    </alternativeName>
    <alternativeName>
        <fullName evidence="1">Phosphate-transporting ATPase</fullName>
    </alternativeName>
</protein>
<accession>Q82G23</accession>
<comment type="function">
    <text evidence="1">Part of the ABC transporter complex PstSACB involved in phosphate import. Responsible for energy coupling to the transport system.</text>
</comment>
<comment type="catalytic activity">
    <reaction evidence="1">
        <text>phosphate(out) + ATP + H2O = ADP + 2 phosphate(in) + H(+)</text>
        <dbReference type="Rhea" id="RHEA:24440"/>
        <dbReference type="ChEBI" id="CHEBI:15377"/>
        <dbReference type="ChEBI" id="CHEBI:15378"/>
        <dbReference type="ChEBI" id="CHEBI:30616"/>
        <dbReference type="ChEBI" id="CHEBI:43474"/>
        <dbReference type="ChEBI" id="CHEBI:456216"/>
        <dbReference type="EC" id="7.3.2.1"/>
    </reaction>
</comment>
<comment type="subunit">
    <text evidence="1">The complex is composed of two ATP-binding proteins (PstB), two transmembrane proteins (PstC and PstA) and a solute-binding protein (PstS).</text>
</comment>
<comment type="subcellular location">
    <subcellularLocation>
        <location evidence="1">Cell membrane</location>
        <topology evidence="1">Peripheral membrane protein</topology>
    </subcellularLocation>
</comment>
<comment type="similarity">
    <text evidence="1">Belongs to the ABC transporter superfamily. Phosphate importer (TC 3.A.1.7) family.</text>
</comment>
<gene>
    <name evidence="1" type="primary">pstB</name>
    <name type="ordered locus">SAV_4075</name>
</gene>
<organism>
    <name type="scientific">Streptomyces avermitilis (strain ATCC 31267 / DSM 46492 / JCM 5070 / NBRC 14893 / NCIMB 12804 / NRRL 8165 / MA-4680)</name>
    <dbReference type="NCBI Taxonomy" id="227882"/>
    <lineage>
        <taxon>Bacteria</taxon>
        <taxon>Bacillati</taxon>
        <taxon>Actinomycetota</taxon>
        <taxon>Actinomycetes</taxon>
        <taxon>Kitasatosporales</taxon>
        <taxon>Streptomycetaceae</taxon>
        <taxon>Streptomyces</taxon>
    </lineage>
</organism>
<reference key="1">
    <citation type="journal article" date="2001" name="Proc. Natl. Acad. Sci. U.S.A.">
        <title>Genome sequence of an industrial microorganism Streptomyces avermitilis: deducing the ability of producing secondary metabolites.</title>
        <authorList>
            <person name="Omura S."/>
            <person name="Ikeda H."/>
            <person name="Ishikawa J."/>
            <person name="Hanamoto A."/>
            <person name="Takahashi C."/>
            <person name="Shinose M."/>
            <person name="Takahashi Y."/>
            <person name="Horikawa H."/>
            <person name="Nakazawa H."/>
            <person name="Osonoe T."/>
            <person name="Kikuchi H."/>
            <person name="Shiba T."/>
            <person name="Sakaki Y."/>
            <person name="Hattori M."/>
        </authorList>
    </citation>
    <scope>NUCLEOTIDE SEQUENCE [LARGE SCALE GENOMIC DNA]</scope>
    <source>
        <strain>ATCC 31267 / DSM 46492 / JCM 5070 / NBRC 14893 / NCIMB 12804 / NRRL 8165 / MA-4680</strain>
    </source>
</reference>
<reference key="2">
    <citation type="journal article" date="2003" name="Nat. Biotechnol.">
        <title>Complete genome sequence and comparative analysis of the industrial microorganism Streptomyces avermitilis.</title>
        <authorList>
            <person name="Ikeda H."/>
            <person name="Ishikawa J."/>
            <person name="Hanamoto A."/>
            <person name="Shinose M."/>
            <person name="Kikuchi H."/>
            <person name="Shiba T."/>
            <person name="Sakaki Y."/>
            <person name="Hattori M."/>
            <person name="Omura S."/>
        </authorList>
    </citation>
    <scope>NUCLEOTIDE SEQUENCE [LARGE SCALE GENOMIC DNA]</scope>
    <source>
        <strain>ATCC 31267 / DSM 46492 / JCM 5070 / NBRC 14893 / NCIMB 12804 / NRRL 8165 / MA-4680</strain>
    </source>
</reference>